<proteinExistence type="inferred from homology"/>
<comment type="function">
    <text evidence="1">One of the primary rRNA binding proteins, it binds directly to 16S rRNA where it nucleates assembly of the body of the 30S subunit.</text>
</comment>
<comment type="function">
    <text evidence="1">With S5 and S12 plays an important role in translational accuracy.</text>
</comment>
<comment type="subunit">
    <text evidence="1">Part of the 30S ribosomal subunit. Contacts protein S5. The interaction surface between S4 and S5 is involved in control of translational fidelity.</text>
</comment>
<comment type="similarity">
    <text evidence="1">Belongs to the universal ribosomal protein uS4 family.</text>
</comment>
<reference key="1">
    <citation type="journal article" date="2005" name="J. Bacteriol.">
        <title>Whole-genome sequencing of Staphylococcus haemolyticus uncovers the extreme plasticity of its genome and the evolution of human-colonizing staphylococcal species.</title>
        <authorList>
            <person name="Takeuchi F."/>
            <person name="Watanabe S."/>
            <person name="Baba T."/>
            <person name="Yuzawa H."/>
            <person name="Ito T."/>
            <person name="Morimoto Y."/>
            <person name="Kuroda M."/>
            <person name="Cui L."/>
            <person name="Takahashi M."/>
            <person name="Ankai A."/>
            <person name="Baba S."/>
            <person name="Fukui S."/>
            <person name="Lee J.C."/>
            <person name="Hiramatsu K."/>
        </authorList>
    </citation>
    <scope>NUCLEOTIDE SEQUENCE [LARGE SCALE GENOMIC DNA]</scope>
    <source>
        <strain>JCSC1435</strain>
    </source>
</reference>
<organism>
    <name type="scientific">Staphylococcus haemolyticus (strain JCSC1435)</name>
    <dbReference type="NCBI Taxonomy" id="279808"/>
    <lineage>
        <taxon>Bacteria</taxon>
        <taxon>Bacillati</taxon>
        <taxon>Bacillota</taxon>
        <taxon>Bacilli</taxon>
        <taxon>Bacillales</taxon>
        <taxon>Staphylococcaceae</taxon>
        <taxon>Staphylococcus</taxon>
    </lineage>
</organism>
<feature type="chain" id="PRO_0000132464" description="Small ribosomal subunit protein uS4">
    <location>
        <begin position="1"/>
        <end position="200"/>
    </location>
</feature>
<feature type="domain" description="S4 RNA-binding" evidence="1">
    <location>
        <begin position="92"/>
        <end position="155"/>
    </location>
</feature>
<keyword id="KW-0687">Ribonucleoprotein</keyword>
<keyword id="KW-0689">Ribosomal protein</keyword>
<keyword id="KW-0694">RNA-binding</keyword>
<keyword id="KW-0699">rRNA-binding</keyword>
<evidence type="ECO:0000255" key="1">
    <source>
        <dbReference type="HAMAP-Rule" id="MF_01306"/>
    </source>
</evidence>
<evidence type="ECO:0000305" key="2"/>
<accession>Q4L760</accession>
<gene>
    <name evidence="1" type="primary">rpsD</name>
    <name type="ordered locus">SH1206</name>
</gene>
<protein>
    <recommendedName>
        <fullName evidence="1">Small ribosomal subunit protein uS4</fullName>
    </recommendedName>
    <alternativeName>
        <fullName evidence="2">30S ribosomal protein S4</fullName>
    </alternativeName>
</protein>
<name>RS4_STAHJ</name>
<sequence length="200" mass="23080">MARFRGSNWKKSRRLGISLSGTGKELEKRPYAPGQHGPNQRKKLSEYGLQLREKQKLRYLYGMTERQFRNTFDIAGKQHGVHGENFMILLASRLDAVVYSLGLARTRRQARQLVGHGHVEVDGRRVDIPSYSLKPGQVITVREKSQNLDIIKESVEINNFVPEYLDFDADSLKGTFVRFPERSELPAEINEQLIVEYYSR</sequence>
<dbReference type="EMBL" id="AP006716">
    <property type="protein sequence ID" value="BAE04515.1"/>
    <property type="molecule type" value="Genomic_DNA"/>
</dbReference>
<dbReference type="RefSeq" id="WP_011275505.1">
    <property type="nucleotide sequence ID" value="NC_007168.1"/>
</dbReference>
<dbReference type="SMR" id="Q4L760"/>
<dbReference type="GeneID" id="74186078"/>
<dbReference type="KEGG" id="sha:SH1206"/>
<dbReference type="eggNOG" id="COG0522">
    <property type="taxonomic scope" value="Bacteria"/>
</dbReference>
<dbReference type="HOGENOM" id="CLU_092403_0_1_9"/>
<dbReference type="OrthoDB" id="9803672at2"/>
<dbReference type="Proteomes" id="UP000000543">
    <property type="component" value="Chromosome"/>
</dbReference>
<dbReference type="GO" id="GO:0015935">
    <property type="term" value="C:small ribosomal subunit"/>
    <property type="evidence" value="ECO:0007669"/>
    <property type="project" value="InterPro"/>
</dbReference>
<dbReference type="GO" id="GO:0019843">
    <property type="term" value="F:rRNA binding"/>
    <property type="evidence" value="ECO:0007669"/>
    <property type="project" value="UniProtKB-UniRule"/>
</dbReference>
<dbReference type="GO" id="GO:0003735">
    <property type="term" value="F:structural constituent of ribosome"/>
    <property type="evidence" value="ECO:0007669"/>
    <property type="project" value="InterPro"/>
</dbReference>
<dbReference type="GO" id="GO:0042274">
    <property type="term" value="P:ribosomal small subunit biogenesis"/>
    <property type="evidence" value="ECO:0007669"/>
    <property type="project" value="TreeGrafter"/>
</dbReference>
<dbReference type="GO" id="GO:0006412">
    <property type="term" value="P:translation"/>
    <property type="evidence" value="ECO:0007669"/>
    <property type="project" value="UniProtKB-UniRule"/>
</dbReference>
<dbReference type="CDD" id="cd00165">
    <property type="entry name" value="S4"/>
    <property type="match status" value="1"/>
</dbReference>
<dbReference type="FunFam" id="1.10.1050.10:FF:000001">
    <property type="entry name" value="30S ribosomal protein S4"/>
    <property type="match status" value="1"/>
</dbReference>
<dbReference type="FunFam" id="3.10.290.10:FF:000001">
    <property type="entry name" value="30S ribosomal protein S4"/>
    <property type="match status" value="1"/>
</dbReference>
<dbReference type="Gene3D" id="1.10.1050.10">
    <property type="entry name" value="Ribosomal Protein S4 Delta 41, Chain A, domain 1"/>
    <property type="match status" value="1"/>
</dbReference>
<dbReference type="Gene3D" id="3.10.290.10">
    <property type="entry name" value="RNA-binding S4 domain"/>
    <property type="match status" value="1"/>
</dbReference>
<dbReference type="HAMAP" id="MF_01306_B">
    <property type="entry name" value="Ribosomal_uS4_B"/>
    <property type="match status" value="1"/>
</dbReference>
<dbReference type="InterPro" id="IPR022801">
    <property type="entry name" value="Ribosomal_uS4"/>
</dbReference>
<dbReference type="InterPro" id="IPR005709">
    <property type="entry name" value="Ribosomal_uS4_bac-type"/>
</dbReference>
<dbReference type="InterPro" id="IPR018079">
    <property type="entry name" value="Ribosomal_uS4_CS"/>
</dbReference>
<dbReference type="InterPro" id="IPR001912">
    <property type="entry name" value="Ribosomal_uS4_N"/>
</dbReference>
<dbReference type="InterPro" id="IPR002942">
    <property type="entry name" value="S4_RNA-bd"/>
</dbReference>
<dbReference type="InterPro" id="IPR036986">
    <property type="entry name" value="S4_RNA-bd_sf"/>
</dbReference>
<dbReference type="NCBIfam" id="NF003717">
    <property type="entry name" value="PRK05327.1"/>
    <property type="match status" value="1"/>
</dbReference>
<dbReference type="NCBIfam" id="TIGR01017">
    <property type="entry name" value="rpsD_bact"/>
    <property type="match status" value="1"/>
</dbReference>
<dbReference type="PANTHER" id="PTHR11831">
    <property type="entry name" value="30S 40S RIBOSOMAL PROTEIN"/>
    <property type="match status" value="1"/>
</dbReference>
<dbReference type="PANTHER" id="PTHR11831:SF4">
    <property type="entry name" value="SMALL RIBOSOMAL SUBUNIT PROTEIN US4M"/>
    <property type="match status" value="1"/>
</dbReference>
<dbReference type="Pfam" id="PF00163">
    <property type="entry name" value="Ribosomal_S4"/>
    <property type="match status" value="1"/>
</dbReference>
<dbReference type="Pfam" id="PF01479">
    <property type="entry name" value="S4"/>
    <property type="match status" value="1"/>
</dbReference>
<dbReference type="SMART" id="SM01390">
    <property type="entry name" value="Ribosomal_S4"/>
    <property type="match status" value="1"/>
</dbReference>
<dbReference type="SMART" id="SM00363">
    <property type="entry name" value="S4"/>
    <property type="match status" value="1"/>
</dbReference>
<dbReference type="SUPFAM" id="SSF55174">
    <property type="entry name" value="Alpha-L RNA-binding motif"/>
    <property type="match status" value="1"/>
</dbReference>
<dbReference type="PROSITE" id="PS00632">
    <property type="entry name" value="RIBOSOMAL_S4"/>
    <property type="match status" value="1"/>
</dbReference>
<dbReference type="PROSITE" id="PS50889">
    <property type="entry name" value="S4"/>
    <property type="match status" value="1"/>
</dbReference>